<sequence>MDDDGFRNWGYYEPAAATFKGNLGLQLMSTIDRNTKPFLPGRDPNLMMGPNGSYHHQEPPIHMSYNWINQQKDKFFNMLPVTTATPNYGNVLPETSSAPSMQMNLHHHLQTEENPVKLEEEIVVQTKKRKTNAKAGSTPKAKKPRKPKDENSNNNNNNNTNVTRVKPAKKSVDLVINGVSMDISGLPVPICTCTGAPQQCYRWGCGGWQSACCTTNISMHPLPMSTKRRGARISGRKMSQGAFKKVLEKLASDGFNFGNPIDLKSHWARHGTNKFVTIR</sequence>
<gene>
    <name evidence="6" type="primary">BPC2</name>
    <name evidence="5" type="synonym">BBR</name>
    <name evidence="9" type="ordered locus">At1g14685</name>
    <name evidence="11" type="ORF">F10B6.5</name>
    <name evidence="10" type="ORF">T5E21.17</name>
</gene>
<dbReference type="EMBL" id="DQ307036">
    <property type="protein sequence ID" value="ABC25617.1"/>
    <property type="molecule type" value="Genomic_DNA"/>
</dbReference>
<dbReference type="EMBL" id="DQ307037">
    <property type="protein sequence ID" value="ABC25618.1"/>
    <property type="molecule type" value="mRNA"/>
</dbReference>
<dbReference type="EMBL" id="AY380568">
    <property type="protein sequence ID" value="AAR25822.1"/>
    <property type="molecule type" value="mRNA"/>
</dbReference>
<dbReference type="EMBL" id="AC006917">
    <property type="protein sequence ID" value="AAF79219.1"/>
    <property type="molecule type" value="Genomic_DNA"/>
</dbReference>
<dbReference type="EMBL" id="AC010657">
    <property type="protein sequence ID" value="AAF63172.1"/>
    <property type="molecule type" value="Genomic_DNA"/>
</dbReference>
<dbReference type="EMBL" id="CP002684">
    <property type="protein sequence ID" value="AEE29202.1"/>
    <property type="molecule type" value="Genomic_DNA"/>
</dbReference>
<dbReference type="EMBL" id="CP002684">
    <property type="protein sequence ID" value="AEE29203.1"/>
    <property type="molecule type" value="Genomic_DNA"/>
</dbReference>
<dbReference type="EMBL" id="CP002684">
    <property type="protein sequence ID" value="AEE29204.1"/>
    <property type="molecule type" value="Genomic_DNA"/>
</dbReference>
<dbReference type="EMBL" id="CP002684">
    <property type="protein sequence ID" value="ANM58904.1"/>
    <property type="molecule type" value="Genomic_DNA"/>
</dbReference>
<dbReference type="EMBL" id="AY058073">
    <property type="protein sequence ID" value="AAL24181.1"/>
    <property type="molecule type" value="mRNA"/>
</dbReference>
<dbReference type="EMBL" id="AY090305">
    <property type="protein sequence ID" value="AAL90966.1"/>
    <property type="molecule type" value="mRNA"/>
</dbReference>
<dbReference type="RefSeq" id="NP_001321304.1">
    <property type="nucleotide sequence ID" value="NM_001332132.1"/>
</dbReference>
<dbReference type="RefSeq" id="NP_563955.1">
    <property type="nucleotide sequence ID" value="NM_101336.4"/>
</dbReference>
<dbReference type="RefSeq" id="NP_849662.1">
    <property type="nucleotide sequence ID" value="NM_179331.3"/>
</dbReference>
<dbReference type="RefSeq" id="NP_973828.1">
    <property type="nucleotide sequence ID" value="NM_202099.1"/>
</dbReference>
<dbReference type="BioGRID" id="23271">
    <property type="interactions" value="5"/>
</dbReference>
<dbReference type="FunCoup" id="Q9LDE2">
    <property type="interactions" value="1415"/>
</dbReference>
<dbReference type="IntAct" id="Q9LDE2">
    <property type="interactions" value="5"/>
</dbReference>
<dbReference type="STRING" id="3702.Q9LDE2"/>
<dbReference type="PaxDb" id="3702-AT1G14685.3"/>
<dbReference type="ProteomicsDB" id="240476"/>
<dbReference type="EnsemblPlants" id="AT1G14685.1">
    <property type="protein sequence ID" value="AT1G14685.1"/>
    <property type="gene ID" value="AT1G14685"/>
</dbReference>
<dbReference type="EnsemblPlants" id="AT1G14685.2">
    <property type="protein sequence ID" value="AT1G14685.2"/>
    <property type="gene ID" value="AT1G14685"/>
</dbReference>
<dbReference type="EnsemblPlants" id="AT1G14685.3">
    <property type="protein sequence ID" value="AT1G14685.3"/>
    <property type="gene ID" value="AT1G14685"/>
</dbReference>
<dbReference type="EnsemblPlants" id="AT1G14685.4">
    <property type="protein sequence ID" value="AT1G14685.4"/>
    <property type="gene ID" value="AT1G14685"/>
</dbReference>
<dbReference type="GeneID" id="838031"/>
<dbReference type="Gramene" id="AT1G14685.1">
    <property type="protein sequence ID" value="AT1G14685.1"/>
    <property type="gene ID" value="AT1G14685"/>
</dbReference>
<dbReference type="Gramene" id="AT1G14685.2">
    <property type="protein sequence ID" value="AT1G14685.2"/>
    <property type="gene ID" value="AT1G14685"/>
</dbReference>
<dbReference type="Gramene" id="AT1G14685.3">
    <property type="protein sequence ID" value="AT1G14685.3"/>
    <property type="gene ID" value="AT1G14685"/>
</dbReference>
<dbReference type="Gramene" id="AT1G14685.4">
    <property type="protein sequence ID" value="AT1G14685.4"/>
    <property type="gene ID" value="AT1G14685"/>
</dbReference>
<dbReference type="KEGG" id="ath:AT1G14685"/>
<dbReference type="Araport" id="AT1G14685"/>
<dbReference type="TAIR" id="AT1G14685">
    <property type="gene designation" value="BPC2"/>
</dbReference>
<dbReference type="eggNOG" id="ENOG502QRPH">
    <property type="taxonomic scope" value="Eukaryota"/>
</dbReference>
<dbReference type="HOGENOM" id="CLU_039119_2_0_1"/>
<dbReference type="InParanoid" id="Q9LDE2"/>
<dbReference type="OMA" id="HERDTKP"/>
<dbReference type="PhylomeDB" id="Q9LDE2"/>
<dbReference type="PRO" id="PR:Q9LDE2"/>
<dbReference type="Proteomes" id="UP000006548">
    <property type="component" value="Chromosome 1"/>
</dbReference>
<dbReference type="ExpressionAtlas" id="Q9LDE2">
    <property type="expression patterns" value="baseline and differential"/>
</dbReference>
<dbReference type="GO" id="GO:0005634">
    <property type="term" value="C:nucleus"/>
    <property type="evidence" value="ECO:0000314"/>
    <property type="project" value="TAIR"/>
</dbReference>
<dbReference type="GO" id="GO:0000987">
    <property type="term" value="F:cis-regulatory region sequence-specific DNA binding"/>
    <property type="evidence" value="ECO:0000314"/>
    <property type="project" value="TAIR"/>
</dbReference>
<dbReference type="GO" id="GO:0003677">
    <property type="term" value="F:DNA binding"/>
    <property type="evidence" value="ECO:0000314"/>
    <property type="project" value="TAIR"/>
</dbReference>
<dbReference type="GO" id="GO:0003700">
    <property type="term" value="F:DNA-binding transcription factor activity"/>
    <property type="evidence" value="ECO:0000314"/>
    <property type="project" value="UniProtKB"/>
</dbReference>
<dbReference type="GO" id="GO:1990837">
    <property type="term" value="F:sequence-specific double-stranded DNA binding"/>
    <property type="evidence" value="ECO:0000314"/>
    <property type="project" value="TAIR"/>
</dbReference>
<dbReference type="GO" id="GO:1901002">
    <property type="term" value="P:positive regulation of response to salt stress"/>
    <property type="evidence" value="ECO:0000316"/>
    <property type="project" value="TAIR"/>
</dbReference>
<dbReference type="GO" id="GO:0050793">
    <property type="term" value="P:regulation of developmental process"/>
    <property type="evidence" value="ECO:0000316"/>
    <property type="project" value="TAIR"/>
</dbReference>
<dbReference type="GO" id="GO:0080157">
    <property type="term" value="P:regulation of plant-type cell wall organization or biogenesis"/>
    <property type="evidence" value="ECO:0000316"/>
    <property type="project" value="TAIR"/>
</dbReference>
<dbReference type="GO" id="GO:0009723">
    <property type="term" value="P:response to ethylene"/>
    <property type="evidence" value="ECO:0000316"/>
    <property type="project" value="TAIR"/>
</dbReference>
<dbReference type="InterPro" id="IPR010409">
    <property type="entry name" value="GAGA-bd_tscrpt_act"/>
</dbReference>
<dbReference type="PANTHER" id="PTHR31421:SF0">
    <property type="entry name" value="PROTEIN BASIC PENTACYSTEINE1-RELATED"/>
    <property type="match status" value="1"/>
</dbReference>
<dbReference type="PANTHER" id="PTHR31421">
    <property type="entry name" value="PROTEIN BASIC PENTACYSTEINE3"/>
    <property type="match status" value="1"/>
</dbReference>
<dbReference type="Pfam" id="PF06217">
    <property type="entry name" value="GAGA_bind"/>
    <property type="match status" value="1"/>
</dbReference>
<dbReference type="SMART" id="SM01226">
    <property type="entry name" value="GAGA_bind"/>
    <property type="match status" value="1"/>
</dbReference>
<organism>
    <name type="scientific">Arabidopsis thaliana</name>
    <name type="common">Mouse-ear cress</name>
    <dbReference type="NCBI Taxonomy" id="3702"/>
    <lineage>
        <taxon>Eukaryota</taxon>
        <taxon>Viridiplantae</taxon>
        <taxon>Streptophyta</taxon>
        <taxon>Embryophyta</taxon>
        <taxon>Tracheophyta</taxon>
        <taxon>Spermatophyta</taxon>
        <taxon>Magnoliopsida</taxon>
        <taxon>eudicotyledons</taxon>
        <taxon>Gunneridae</taxon>
        <taxon>Pentapetalae</taxon>
        <taxon>rosids</taxon>
        <taxon>malvids</taxon>
        <taxon>Brassicales</taxon>
        <taxon>Brassicaceae</taxon>
        <taxon>Camelineae</taxon>
        <taxon>Arabidopsis</taxon>
    </lineage>
</organism>
<accession>Q9LDE2</accession>
<accession>Q2PQS1</accession>
<keyword id="KW-0238">DNA-binding</keyword>
<keyword id="KW-0539">Nucleus</keyword>
<keyword id="KW-1185">Reference proteome</keyword>
<keyword id="KW-0804">Transcription</keyword>
<keyword id="KW-0805">Transcription regulation</keyword>
<proteinExistence type="evidence at protein level"/>
<evidence type="ECO:0000250" key="1"/>
<evidence type="ECO:0000256" key="2">
    <source>
        <dbReference type="SAM" id="MobiDB-lite"/>
    </source>
</evidence>
<evidence type="ECO:0000269" key="3">
    <source>
    </source>
</evidence>
<evidence type="ECO:0000269" key="4">
    <source>
    </source>
</evidence>
<evidence type="ECO:0000303" key="5">
    <source>
    </source>
</evidence>
<evidence type="ECO:0000303" key="6">
    <source>
    </source>
</evidence>
<evidence type="ECO:0000303" key="7">
    <source ref="6"/>
</evidence>
<evidence type="ECO:0000305" key="8"/>
<evidence type="ECO:0000312" key="9">
    <source>
        <dbReference type="Araport" id="AT1G14685"/>
    </source>
</evidence>
<evidence type="ECO:0000312" key="10">
    <source>
        <dbReference type="EMBL" id="AAF63172.1"/>
    </source>
</evidence>
<evidence type="ECO:0000312" key="11">
    <source>
        <dbReference type="EMBL" id="AAF79219.1"/>
    </source>
</evidence>
<feature type="chain" id="PRO_0000413436" description="Protein BASIC PENTACYSTEINE2">
    <location>
        <begin position="1"/>
        <end position="279"/>
    </location>
</feature>
<feature type="region of interest" description="Disordered" evidence="2">
    <location>
        <begin position="126"/>
        <end position="167"/>
    </location>
</feature>
<feature type="compositionally biased region" description="Low complexity" evidence="2">
    <location>
        <begin position="152"/>
        <end position="161"/>
    </location>
</feature>
<feature type="sequence variant" description="In strain: cv. Shokei.">
    <original>N</original>
    <variation>S</variation>
    <location>
        <position position="151"/>
    </location>
</feature>
<feature type="sequence variant" description="In strain: cv. Shokei.">
    <original>N</original>
    <variation>D</variation>
    <location>
        <position position="161"/>
    </location>
</feature>
<name>BPC2_ARATH</name>
<protein>
    <recommendedName>
        <fullName evidence="6">Protein BASIC PENTACYSTEINE2</fullName>
        <shortName evidence="6">AtBPC2</shortName>
    </recommendedName>
    <alternativeName>
        <fullName evidence="7">GAGA-binding transcriptional activator BBR/BPC2</fullName>
    </alternativeName>
</protein>
<comment type="function">
    <text evidence="3">Transcriptional regulator that specifically binds to GA-rich elements (GAGA-repeats) present in regulatory sequences of genes involved in developmental processes.</text>
</comment>
<comment type="interaction">
    <interactant intactId="EBI-15215888">
        <id>Q9LDE2</id>
    </interactant>
    <interactant intactId="EBI-4426649">
        <id>Q17TI5</id>
        <label>BRX</label>
    </interactant>
    <organismsDiffer>false</organismsDiffer>
    <experiments>3</experiments>
</comment>
<comment type="subcellular location">
    <subcellularLocation>
        <location evidence="1">Nucleus</location>
    </subcellularLocation>
</comment>
<comment type="tissue specificity">
    <text evidence="3 4">Expressed in seedlings, leaves and pistils. Detected in the base of flowers and tips of carpels, in sepal and petal vasculature, in pollen grains, in young rosette, in the lateral and tip of primary roots, and in ovule at the exception of the outer integument.</text>
</comment>
<comment type="similarity">
    <text evidence="8">Belongs to the BBR/BPC family.</text>
</comment>
<reference key="1">
    <citation type="journal article" date="2003" name="Plant J.">
        <title>The GA octodinucleotide repeat binding factor BBR participates in the transcriptional regulation of the homeobox gene Bkn3.</title>
        <authorList>
            <person name="Santi L."/>
            <person name="Wang Y."/>
            <person name="Stile M.R."/>
            <person name="Berendzen K.W."/>
            <person name="Wanke D."/>
            <person name="Roig C."/>
            <person name="Pozzi C."/>
            <person name="Mueller K."/>
            <person name="Mueller J."/>
            <person name="Rohde W."/>
            <person name="Salamini F."/>
        </authorList>
    </citation>
    <scope>NUCLEOTIDE SEQUENCE [GENOMIC DNA / MRNA]</scope>
    <source>
        <strain>cv. Shokei</strain>
    </source>
</reference>
<reference key="2">
    <citation type="journal article" date="2004" name="Plant J.">
        <title>Definition and interactions of a positive regulatory element of the Arabidopsis INNER NO OUTER promoter.</title>
        <authorList>
            <person name="Meister R.J."/>
            <person name="Williams L.A."/>
            <person name="Monfared M.M."/>
            <person name="Gallagher T.L."/>
            <person name="Kraft E.A."/>
            <person name="Nelson C.G."/>
            <person name="Gasser C.S."/>
        </authorList>
    </citation>
    <scope>NUCLEOTIDE SEQUENCE [MRNA]</scope>
    <scope>FUNCTION</scope>
    <scope>DNA-BINDING</scope>
    <scope>TISSUE SPECIFICITY</scope>
    <source>
        <strain>cv. Landsberg erecta</strain>
    </source>
</reference>
<reference key="3">
    <citation type="journal article" date="2000" name="Nature">
        <title>Sequence and analysis of chromosome 1 of the plant Arabidopsis thaliana.</title>
        <authorList>
            <person name="Theologis A."/>
            <person name="Ecker J.R."/>
            <person name="Palm C.J."/>
            <person name="Federspiel N.A."/>
            <person name="Kaul S."/>
            <person name="White O."/>
            <person name="Alonso J."/>
            <person name="Altafi H."/>
            <person name="Araujo R."/>
            <person name="Bowman C.L."/>
            <person name="Brooks S.Y."/>
            <person name="Buehler E."/>
            <person name="Chan A."/>
            <person name="Chao Q."/>
            <person name="Chen H."/>
            <person name="Cheuk R.F."/>
            <person name="Chin C.W."/>
            <person name="Chung M.K."/>
            <person name="Conn L."/>
            <person name="Conway A.B."/>
            <person name="Conway A.R."/>
            <person name="Creasy T.H."/>
            <person name="Dewar K."/>
            <person name="Dunn P."/>
            <person name="Etgu P."/>
            <person name="Feldblyum T.V."/>
            <person name="Feng J.-D."/>
            <person name="Fong B."/>
            <person name="Fujii C.Y."/>
            <person name="Gill J.E."/>
            <person name="Goldsmith A.D."/>
            <person name="Haas B."/>
            <person name="Hansen N.F."/>
            <person name="Hughes B."/>
            <person name="Huizar L."/>
            <person name="Hunter J.L."/>
            <person name="Jenkins J."/>
            <person name="Johnson-Hopson C."/>
            <person name="Khan S."/>
            <person name="Khaykin E."/>
            <person name="Kim C.J."/>
            <person name="Koo H.L."/>
            <person name="Kremenetskaia I."/>
            <person name="Kurtz D.B."/>
            <person name="Kwan A."/>
            <person name="Lam B."/>
            <person name="Langin-Hooper S."/>
            <person name="Lee A."/>
            <person name="Lee J.M."/>
            <person name="Lenz C.A."/>
            <person name="Li J.H."/>
            <person name="Li Y.-P."/>
            <person name="Lin X."/>
            <person name="Liu S.X."/>
            <person name="Liu Z.A."/>
            <person name="Luros J.S."/>
            <person name="Maiti R."/>
            <person name="Marziali A."/>
            <person name="Militscher J."/>
            <person name="Miranda M."/>
            <person name="Nguyen M."/>
            <person name="Nierman W.C."/>
            <person name="Osborne B.I."/>
            <person name="Pai G."/>
            <person name="Peterson J."/>
            <person name="Pham P.K."/>
            <person name="Rizzo M."/>
            <person name="Rooney T."/>
            <person name="Rowley D."/>
            <person name="Sakano H."/>
            <person name="Salzberg S.L."/>
            <person name="Schwartz J.R."/>
            <person name="Shinn P."/>
            <person name="Southwick A.M."/>
            <person name="Sun H."/>
            <person name="Tallon L.J."/>
            <person name="Tambunga G."/>
            <person name="Toriumi M.J."/>
            <person name="Town C.D."/>
            <person name="Utterback T."/>
            <person name="Van Aken S."/>
            <person name="Vaysberg M."/>
            <person name="Vysotskaia V.S."/>
            <person name="Walker M."/>
            <person name="Wu D."/>
            <person name="Yu G."/>
            <person name="Fraser C.M."/>
            <person name="Venter J.C."/>
            <person name="Davis R.W."/>
        </authorList>
    </citation>
    <scope>NUCLEOTIDE SEQUENCE [LARGE SCALE GENOMIC DNA]</scope>
    <source>
        <strain>cv. Columbia</strain>
    </source>
</reference>
<reference key="4">
    <citation type="journal article" date="2017" name="Plant J.">
        <title>Araport11: a complete reannotation of the Arabidopsis thaliana reference genome.</title>
        <authorList>
            <person name="Cheng C.Y."/>
            <person name="Krishnakumar V."/>
            <person name="Chan A.P."/>
            <person name="Thibaud-Nissen F."/>
            <person name="Schobel S."/>
            <person name="Town C.D."/>
        </authorList>
    </citation>
    <scope>GENOME REANNOTATION</scope>
    <source>
        <strain>cv. Columbia</strain>
    </source>
</reference>
<reference key="5">
    <citation type="journal article" date="2003" name="Science">
        <title>Empirical analysis of transcriptional activity in the Arabidopsis genome.</title>
        <authorList>
            <person name="Yamada K."/>
            <person name="Lim J."/>
            <person name="Dale J.M."/>
            <person name="Chen H."/>
            <person name="Shinn P."/>
            <person name="Palm C.J."/>
            <person name="Southwick A.M."/>
            <person name="Wu H.C."/>
            <person name="Kim C.J."/>
            <person name="Nguyen M."/>
            <person name="Pham P.K."/>
            <person name="Cheuk R.F."/>
            <person name="Karlin-Newmann G."/>
            <person name="Liu S.X."/>
            <person name="Lam B."/>
            <person name="Sakano H."/>
            <person name="Wu T."/>
            <person name="Yu G."/>
            <person name="Miranda M."/>
            <person name="Quach H.L."/>
            <person name="Tripp M."/>
            <person name="Chang C.H."/>
            <person name="Lee J.M."/>
            <person name="Toriumi M.J."/>
            <person name="Chan M.M."/>
            <person name="Tang C.C."/>
            <person name="Onodera C.S."/>
            <person name="Deng J.M."/>
            <person name="Akiyama K."/>
            <person name="Ansari Y."/>
            <person name="Arakawa T."/>
            <person name="Banh J."/>
            <person name="Banno F."/>
            <person name="Bowser L."/>
            <person name="Brooks S.Y."/>
            <person name="Carninci P."/>
            <person name="Chao Q."/>
            <person name="Choy N."/>
            <person name="Enju A."/>
            <person name="Goldsmith A.D."/>
            <person name="Gurjal M."/>
            <person name="Hansen N.F."/>
            <person name="Hayashizaki Y."/>
            <person name="Johnson-Hopson C."/>
            <person name="Hsuan V.W."/>
            <person name="Iida K."/>
            <person name="Karnes M."/>
            <person name="Khan S."/>
            <person name="Koesema E."/>
            <person name="Ishida J."/>
            <person name="Jiang P.X."/>
            <person name="Jones T."/>
            <person name="Kawai J."/>
            <person name="Kamiya A."/>
            <person name="Meyers C."/>
            <person name="Nakajima M."/>
            <person name="Narusaka M."/>
            <person name="Seki M."/>
            <person name="Sakurai T."/>
            <person name="Satou M."/>
            <person name="Tamse R."/>
            <person name="Vaysberg M."/>
            <person name="Wallender E.K."/>
            <person name="Wong C."/>
            <person name="Yamamura Y."/>
            <person name="Yuan S."/>
            <person name="Shinozaki K."/>
            <person name="Davis R.W."/>
            <person name="Theologis A."/>
            <person name="Ecker J.R."/>
        </authorList>
    </citation>
    <scope>NUCLEOTIDE SEQUENCE [LARGE SCALE MRNA]</scope>
    <source>
        <strain>cv. Columbia</strain>
    </source>
</reference>
<reference key="6">
    <citation type="book" date="2009" name="Proceedings of the 20th international conference on Arabidopsis research">
        <title>The plant specific BPC/BBR family of GAGA-repeat binding proteins.</title>
        <authorList>
            <person name="Bloss U."/>
            <person name="Hohenstatt M.L."/>
            <person name="Hummel S."/>
            <person name="Harter K."/>
            <person name="Wanke D."/>
        </authorList>
    </citation>
    <scope>GENE FAMILY</scope>
</reference>
<reference key="7">
    <citation type="journal article" date="2010" name="Plant Methods">
        <title>DPI-ELISA: a fast and versatile method to specify the binding of plant transcription factors to DNA in vitro.</title>
        <authorList>
            <person name="Brand L.H."/>
            <person name="Kirchler T."/>
            <person name="Hummel S."/>
            <person name="Chaban C."/>
            <person name="Wanke D."/>
        </authorList>
    </citation>
    <scope>DNA-BINDING</scope>
</reference>
<reference key="8">
    <citation type="journal article" date="2011" name="Plant J.">
        <title>Overlapping and antagonistic activities of BASIC PENTACYSTEINE genes affect a range of developmental processes in Arabidopsis.</title>
        <authorList>
            <person name="Monfared M.M."/>
            <person name="Simon M.K."/>
            <person name="Meister R.J."/>
            <person name="Roig-Villanova I."/>
            <person name="Kooiker M."/>
            <person name="Colombo L."/>
            <person name="Fletcher J.C."/>
            <person name="Gasser C.S."/>
        </authorList>
    </citation>
    <scope>TISSUE SPECIFICITY</scope>
</reference>